<organism>
    <name type="scientific">Desulfovibrio desulfuricans (strain ATCC 27774 / DSM 6949 / MB)</name>
    <dbReference type="NCBI Taxonomy" id="525146"/>
    <lineage>
        <taxon>Bacteria</taxon>
        <taxon>Pseudomonadati</taxon>
        <taxon>Thermodesulfobacteriota</taxon>
        <taxon>Desulfovibrionia</taxon>
        <taxon>Desulfovibrionales</taxon>
        <taxon>Desulfovibrionaceae</taxon>
        <taxon>Desulfovibrio</taxon>
    </lineage>
</organism>
<sequence length="437" mass="49271">MSTLTPREIVAELNKFVVGQEQAKRMVAVAVRNRWRRQHLPSDLRDEVSPKNIIMMGPTGVGKTEIARRLARLSGAPFIKVEATKFTEVGYVGRDVESMVRDLMEIGINLVRDEENARVRKAAEAAAESRLMDLLLPNSFGQEERASTREKLLQQFRLGFLDEREVEMEVTEQGGGGVDIFAIPGMEQMGGQVKDMFSKAFPPKHSRRKMKIRDAFNVLVQEESGKLVDQDALSQRAKERVEQTGIIFIDEIDKIASSSQNRTSDISREGVQRDLLPIVEGSSVNTKYGMIRTDHILFIAAGAFHFSKPSDMIPELQGRFPLRVELQALGREEFLRILTEPDNALTKQYEALLGTEQIRLSFTMDGLEEIAAFAEDINSRTENIGARRLYTIMEKILADISFDAPDMPGAQIVVNKDYVVEHLQDVRGDQDLTQYIL</sequence>
<reference key="1">
    <citation type="submission" date="2009-01" db="EMBL/GenBank/DDBJ databases">
        <title>Complete sequence of Desulfovibrio desulfuricans subsp. desulfuricans str. ATCC 27774.</title>
        <authorList>
            <consortium name="US DOE Joint Genome Institute"/>
            <person name="Lucas S."/>
            <person name="Copeland A."/>
            <person name="Lapidus A."/>
            <person name="Glavina del Rio T."/>
            <person name="Tice H."/>
            <person name="Bruce D."/>
            <person name="Goodwin L."/>
            <person name="Pitluck S."/>
            <person name="Sims D."/>
            <person name="Lu M."/>
            <person name="Kiss H."/>
            <person name="Meineke L."/>
            <person name="Brettin T."/>
            <person name="Detter J.C."/>
            <person name="Han C."/>
            <person name="Larimer F."/>
            <person name="Land M."/>
            <person name="Hauser L."/>
            <person name="Kyrpides N."/>
            <person name="Ovchinnikova G."/>
            <person name="Hazen T.C."/>
        </authorList>
    </citation>
    <scope>NUCLEOTIDE SEQUENCE [LARGE SCALE GENOMIC DNA]</scope>
    <source>
        <strain>ATCC 27774 / DSM 6949 / MB</strain>
    </source>
</reference>
<keyword id="KW-0067">ATP-binding</keyword>
<keyword id="KW-0143">Chaperone</keyword>
<keyword id="KW-0963">Cytoplasm</keyword>
<keyword id="KW-0547">Nucleotide-binding</keyword>
<keyword id="KW-0346">Stress response</keyword>
<accession>B8IZJ2</accession>
<proteinExistence type="inferred from homology"/>
<protein>
    <recommendedName>
        <fullName evidence="1">ATP-dependent protease ATPase subunit HslU</fullName>
    </recommendedName>
    <alternativeName>
        <fullName evidence="1">Unfoldase HslU</fullName>
    </alternativeName>
</protein>
<dbReference type="EMBL" id="CP001358">
    <property type="protein sequence ID" value="ACL48919.1"/>
    <property type="molecule type" value="Genomic_DNA"/>
</dbReference>
<dbReference type="SMR" id="B8IZJ2"/>
<dbReference type="STRING" id="525146.Ddes_1012"/>
<dbReference type="KEGG" id="dds:Ddes_1012"/>
<dbReference type="eggNOG" id="COG1220">
    <property type="taxonomic scope" value="Bacteria"/>
</dbReference>
<dbReference type="HOGENOM" id="CLU_033123_0_0_7"/>
<dbReference type="GO" id="GO:0009376">
    <property type="term" value="C:HslUV protease complex"/>
    <property type="evidence" value="ECO:0007669"/>
    <property type="project" value="UniProtKB-UniRule"/>
</dbReference>
<dbReference type="GO" id="GO:0005524">
    <property type="term" value="F:ATP binding"/>
    <property type="evidence" value="ECO:0007669"/>
    <property type="project" value="UniProtKB-UniRule"/>
</dbReference>
<dbReference type="GO" id="GO:0016887">
    <property type="term" value="F:ATP hydrolysis activity"/>
    <property type="evidence" value="ECO:0007669"/>
    <property type="project" value="InterPro"/>
</dbReference>
<dbReference type="GO" id="GO:0008233">
    <property type="term" value="F:peptidase activity"/>
    <property type="evidence" value="ECO:0007669"/>
    <property type="project" value="InterPro"/>
</dbReference>
<dbReference type="GO" id="GO:0036402">
    <property type="term" value="F:proteasome-activating activity"/>
    <property type="evidence" value="ECO:0007669"/>
    <property type="project" value="UniProtKB-UniRule"/>
</dbReference>
<dbReference type="GO" id="GO:0043335">
    <property type="term" value="P:protein unfolding"/>
    <property type="evidence" value="ECO:0007669"/>
    <property type="project" value="UniProtKB-UniRule"/>
</dbReference>
<dbReference type="GO" id="GO:0051603">
    <property type="term" value="P:proteolysis involved in protein catabolic process"/>
    <property type="evidence" value="ECO:0007669"/>
    <property type="project" value="TreeGrafter"/>
</dbReference>
<dbReference type="CDD" id="cd19498">
    <property type="entry name" value="RecA-like_HslU"/>
    <property type="match status" value="1"/>
</dbReference>
<dbReference type="FunFam" id="3.40.50.300:FF:000220">
    <property type="entry name" value="ATP-dependent protease ATPase subunit HslU"/>
    <property type="match status" value="1"/>
</dbReference>
<dbReference type="Gene3D" id="1.10.8.60">
    <property type="match status" value="1"/>
</dbReference>
<dbReference type="Gene3D" id="3.40.50.300">
    <property type="entry name" value="P-loop containing nucleotide triphosphate hydrolases"/>
    <property type="match status" value="2"/>
</dbReference>
<dbReference type="HAMAP" id="MF_00249">
    <property type="entry name" value="HslU"/>
    <property type="match status" value="1"/>
</dbReference>
<dbReference type="InterPro" id="IPR003593">
    <property type="entry name" value="AAA+_ATPase"/>
</dbReference>
<dbReference type="InterPro" id="IPR050052">
    <property type="entry name" value="ATP-dep_Clp_protease_ClpX"/>
</dbReference>
<dbReference type="InterPro" id="IPR003959">
    <property type="entry name" value="ATPase_AAA_core"/>
</dbReference>
<dbReference type="InterPro" id="IPR019489">
    <property type="entry name" value="Clp_ATPase_C"/>
</dbReference>
<dbReference type="InterPro" id="IPR004491">
    <property type="entry name" value="HslU"/>
</dbReference>
<dbReference type="InterPro" id="IPR027417">
    <property type="entry name" value="P-loop_NTPase"/>
</dbReference>
<dbReference type="NCBIfam" id="TIGR00390">
    <property type="entry name" value="hslU"/>
    <property type="match status" value="1"/>
</dbReference>
<dbReference type="NCBIfam" id="NF003544">
    <property type="entry name" value="PRK05201.1"/>
    <property type="match status" value="1"/>
</dbReference>
<dbReference type="PANTHER" id="PTHR48102">
    <property type="entry name" value="ATP-DEPENDENT CLP PROTEASE ATP-BINDING SUBUNIT CLPX-LIKE, MITOCHONDRIAL-RELATED"/>
    <property type="match status" value="1"/>
</dbReference>
<dbReference type="PANTHER" id="PTHR48102:SF3">
    <property type="entry name" value="ATP-DEPENDENT PROTEASE ATPASE SUBUNIT HSLU"/>
    <property type="match status" value="1"/>
</dbReference>
<dbReference type="Pfam" id="PF00004">
    <property type="entry name" value="AAA"/>
    <property type="match status" value="1"/>
</dbReference>
<dbReference type="Pfam" id="PF07724">
    <property type="entry name" value="AAA_2"/>
    <property type="match status" value="1"/>
</dbReference>
<dbReference type="SMART" id="SM00382">
    <property type="entry name" value="AAA"/>
    <property type="match status" value="1"/>
</dbReference>
<dbReference type="SMART" id="SM01086">
    <property type="entry name" value="ClpB_D2-small"/>
    <property type="match status" value="1"/>
</dbReference>
<dbReference type="SUPFAM" id="SSF52540">
    <property type="entry name" value="P-loop containing nucleoside triphosphate hydrolases"/>
    <property type="match status" value="1"/>
</dbReference>
<comment type="function">
    <text evidence="1">ATPase subunit of a proteasome-like degradation complex; this subunit has chaperone activity. The binding of ATP and its subsequent hydrolysis by HslU are essential for unfolding of protein substrates subsequently hydrolyzed by HslV. HslU recognizes the N-terminal part of its protein substrates and unfolds these before they are guided to HslV for hydrolysis.</text>
</comment>
<comment type="subunit">
    <text evidence="1">A double ring-shaped homohexamer of HslV is capped on each side by a ring-shaped HslU homohexamer. The assembly of the HslU/HslV complex is dependent on binding of ATP.</text>
</comment>
<comment type="subcellular location">
    <subcellularLocation>
        <location evidence="1">Cytoplasm</location>
    </subcellularLocation>
</comment>
<comment type="similarity">
    <text evidence="1">Belongs to the ClpX chaperone family. HslU subfamily.</text>
</comment>
<feature type="chain" id="PRO_1000125434" description="ATP-dependent protease ATPase subunit HslU">
    <location>
        <begin position="1"/>
        <end position="437"/>
    </location>
</feature>
<feature type="binding site" evidence="1">
    <location>
        <position position="18"/>
    </location>
    <ligand>
        <name>ATP</name>
        <dbReference type="ChEBI" id="CHEBI:30616"/>
    </ligand>
</feature>
<feature type="binding site" evidence="1">
    <location>
        <begin position="60"/>
        <end position="65"/>
    </location>
    <ligand>
        <name>ATP</name>
        <dbReference type="ChEBI" id="CHEBI:30616"/>
    </ligand>
</feature>
<feature type="binding site" evidence="1">
    <location>
        <position position="250"/>
    </location>
    <ligand>
        <name>ATP</name>
        <dbReference type="ChEBI" id="CHEBI:30616"/>
    </ligand>
</feature>
<feature type="binding site" evidence="1">
    <location>
        <position position="315"/>
    </location>
    <ligand>
        <name>ATP</name>
        <dbReference type="ChEBI" id="CHEBI:30616"/>
    </ligand>
</feature>
<feature type="binding site" evidence="1">
    <location>
        <position position="387"/>
    </location>
    <ligand>
        <name>ATP</name>
        <dbReference type="ChEBI" id="CHEBI:30616"/>
    </ligand>
</feature>
<gene>
    <name evidence="1" type="primary">hslU</name>
    <name type="ordered locus">Ddes_1012</name>
</gene>
<evidence type="ECO:0000255" key="1">
    <source>
        <dbReference type="HAMAP-Rule" id="MF_00249"/>
    </source>
</evidence>
<name>HSLU_DESDA</name>